<protein>
    <recommendedName>
        <fullName evidence="1">Large ribosomal subunit protein uL4</fullName>
    </recommendedName>
    <alternativeName>
        <fullName evidence="3">50S ribosomal protein L4</fullName>
    </alternativeName>
</protein>
<proteinExistence type="inferred from homology"/>
<accession>A6U860</accession>
<keyword id="KW-0687">Ribonucleoprotein</keyword>
<keyword id="KW-0689">Ribosomal protein</keyword>
<keyword id="KW-0694">RNA-binding</keyword>
<keyword id="KW-0699">rRNA-binding</keyword>
<evidence type="ECO:0000255" key="1">
    <source>
        <dbReference type="HAMAP-Rule" id="MF_01328"/>
    </source>
</evidence>
<evidence type="ECO:0000256" key="2">
    <source>
        <dbReference type="SAM" id="MobiDB-lite"/>
    </source>
</evidence>
<evidence type="ECO:0000305" key="3"/>
<reference key="1">
    <citation type="submission" date="2007-06" db="EMBL/GenBank/DDBJ databases">
        <title>Complete sequence of Sinorhizobium medicae WSM419 chromosome.</title>
        <authorList>
            <consortium name="US DOE Joint Genome Institute"/>
            <person name="Copeland A."/>
            <person name="Lucas S."/>
            <person name="Lapidus A."/>
            <person name="Barry K."/>
            <person name="Glavina del Rio T."/>
            <person name="Dalin E."/>
            <person name="Tice H."/>
            <person name="Pitluck S."/>
            <person name="Chain P."/>
            <person name="Malfatti S."/>
            <person name="Shin M."/>
            <person name="Vergez L."/>
            <person name="Schmutz J."/>
            <person name="Larimer F."/>
            <person name="Land M."/>
            <person name="Hauser L."/>
            <person name="Kyrpides N."/>
            <person name="Mikhailova N."/>
            <person name="Reeve W.G."/>
            <person name="Richardson P."/>
        </authorList>
    </citation>
    <scope>NUCLEOTIDE SEQUENCE [LARGE SCALE GENOMIC DNA]</scope>
    <source>
        <strain>WSM419</strain>
    </source>
</reference>
<feature type="chain" id="PRO_1000052503" description="Large ribosomal subunit protein uL4">
    <location>
        <begin position="1"/>
        <end position="206"/>
    </location>
</feature>
<feature type="region of interest" description="Disordered" evidence="2">
    <location>
        <begin position="63"/>
        <end position="93"/>
    </location>
</feature>
<feature type="compositionally biased region" description="Basic residues" evidence="2">
    <location>
        <begin position="64"/>
        <end position="77"/>
    </location>
</feature>
<gene>
    <name evidence="1" type="primary">rplD</name>
    <name type="ordered locus">Smed_0987</name>
</gene>
<comment type="function">
    <text evidence="1">One of the primary rRNA binding proteins, this protein initially binds near the 5'-end of the 23S rRNA. It is important during the early stages of 50S assembly. It makes multiple contacts with different domains of the 23S rRNA in the assembled 50S subunit and ribosome.</text>
</comment>
<comment type="function">
    <text evidence="1">Forms part of the polypeptide exit tunnel.</text>
</comment>
<comment type="subunit">
    <text evidence="1">Part of the 50S ribosomal subunit.</text>
</comment>
<comment type="similarity">
    <text evidence="1">Belongs to the universal ribosomal protein uL4 family.</text>
</comment>
<dbReference type="EMBL" id="CP000738">
    <property type="protein sequence ID" value="ABR59840.1"/>
    <property type="molecule type" value="Genomic_DNA"/>
</dbReference>
<dbReference type="RefSeq" id="WP_011975172.1">
    <property type="nucleotide sequence ID" value="NC_009636.1"/>
</dbReference>
<dbReference type="RefSeq" id="YP_001326675.1">
    <property type="nucleotide sequence ID" value="NC_009636.1"/>
</dbReference>
<dbReference type="SMR" id="A6U860"/>
<dbReference type="STRING" id="366394.Smed_0987"/>
<dbReference type="GeneID" id="61614929"/>
<dbReference type="KEGG" id="smd:Smed_0987"/>
<dbReference type="PATRIC" id="fig|366394.8.peg.4108"/>
<dbReference type="eggNOG" id="COG0088">
    <property type="taxonomic scope" value="Bacteria"/>
</dbReference>
<dbReference type="HOGENOM" id="CLU_041575_5_1_5"/>
<dbReference type="OrthoDB" id="9803201at2"/>
<dbReference type="Proteomes" id="UP000001108">
    <property type="component" value="Chromosome"/>
</dbReference>
<dbReference type="GO" id="GO:1990904">
    <property type="term" value="C:ribonucleoprotein complex"/>
    <property type="evidence" value="ECO:0007669"/>
    <property type="project" value="UniProtKB-KW"/>
</dbReference>
<dbReference type="GO" id="GO:0005840">
    <property type="term" value="C:ribosome"/>
    <property type="evidence" value="ECO:0007669"/>
    <property type="project" value="UniProtKB-KW"/>
</dbReference>
<dbReference type="GO" id="GO:0019843">
    <property type="term" value="F:rRNA binding"/>
    <property type="evidence" value="ECO:0007669"/>
    <property type="project" value="UniProtKB-UniRule"/>
</dbReference>
<dbReference type="GO" id="GO:0003735">
    <property type="term" value="F:structural constituent of ribosome"/>
    <property type="evidence" value="ECO:0007669"/>
    <property type="project" value="InterPro"/>
</dbReference>
<dbReference type="GO" id="GO:0006412">
    <property type="term" value="P:translation"/>
    <property type="evidence" value="ECO:0007669"/>
    <property type="project" value="UniProtKB-UniRule"/>
</dbReference>
<dbReference type="Gene3D" id="3.40.1370.10">
    <property type="match status" value="1"/>
</dbReference>
<dbReference type="HAMAP" id="MF_01328_B">
    <property type="entry name" value="Ribosomal_uL4_B"/>
    <property type="match status" value="1"/>
</dbReference>
<dbReference type="InterPro" id="IPR002136">
    <property type="entry name" value="Ribosomal_uL4"/>
</dbReference>
<dbReference type="InterPro" id="IPR013005">
    <property type="entry name" value="Ribosomal_uL4-like"/>
</dbReference>
<dbReference type="InterPro" id="IPR023574">
    <property type="entry name" value="Ribosomal_uL4_dom_sf"/>
</dbReference>
<dbReference type="NCBIfam" id="TIGR03953">
    <property type="entry name" value="rplD_bact"/>
    <property type="match status" value="1"/>
</dbReference>
<dbReference type="PANTHER" id="PTHR10746">
    <property type="entry name" value="50S RIBOSOMAL PROTEIN L4"/>
    <property type="match status" value="1"/>
</dbReference>
<dbReference type="PANTHER" id="PTHR10746:SF6">
    <property type="entry name" value="LARGE RIBOSOMAL SUBUNIT PROTEIN UL4M"/>
    <property type="match status" value="1"/>
</dbReference>
<dbReference type="Pfam" id="PF00573">
    <property type="entry name" value="Ribosomal_L4"/>
    <property type="match status" value="1"/>
</dbReference>
<dbReference type="SUPFAM" id="SSF52166">
    <property type="entry name" value="Ribosomal protein L4"/>
    <property type="match status" value="1"/>
</dbReference>
<organism>
    <name type="scientific">Sinorhizobium medicae (strain WSM419)</name>
    <name type="common">Ensifer medicae</name>
    <dbReference type="NCBI Taxonomy" id="366394"/>
    <lineage>
        <taxon>Bacteria</taxon>
        <taxon>Pseudomonadati</taxon>
        <taxon>Pseudomonadota</taxon>
        <taxon>Alphaproteobacteria</taxon>
        <taxon>Hyphomicrobiales</taxon>
        <taxon>Rhizobiaceae</taxon>
        <taxon>Sinorhizobium/Ensifer group</taxon>
        <taxon>Sinorhizobium</taxon>
    </lineage>
</organism>
<sequence length="206" mass="22228">MDLTVKTLEGKDAGKVSLSDAIFGLEPREDIIARVVRWQLAKRQQGTHKAKGRAEVSRTGAKMYKQKGTGRARHHSARAPQFRGGGKAHGPVVRSHAHDLPKKVRALGLRHALSAKLKAEEIIIVDDLVANEAKTKALAGAFASLGLTNALIIGGAEIEGNFKLAAQNIPNVDVLPVQGINVYDILRRGKLVLSKAAVEALEERFK</sequence>
<name>RL4_SINMW</name>